<comment type="function">
    <text evidence="1">This b-type cytochrome is tightly associated with the reaction center of photosystem II (PSII). PSII is a light-driven water:plastoquinone oxidoreductase that uses light energy to abstract electrons from H(2)O, generating O(2) and a proton gradient subsequently used for ATP formation. It consists of a core antenna complex that captures photons, and an electron transfer chain that converts photonic excitation into a charge separation.</text>
</comment>
<comment type="cofactor">
    <cofactor evidence="1">
        <name>heme b</name>
        <dbReference type="ChEBI" id="CHEBI:60344"/>
    </cofactor>
    <text evidence="1">With its partner (PsbF) binds heme. PSII binds additional chlorophylls, carotenoids and specific lipids.</text>
</comment>
<comment type="subunit">
    <text evidence="2">Heterodimer of an alpha subunit and a beta subunit. PSII is composed of 1 copy each of membrane proteins PsbA, PsbB, PsbC, PsbD, PsbE, PsbF, PsbH, PsbI, PsbJ, PsbK, PsbL, PsbM, PsbT, PsbX, PsbY, Psb30/Ycf12, peripheral proteins PsbO, CyanoQ (PsbQ), PsbU, PsbV and a large number of cofactors. It forms dimeric complexes.</text>
</comment>
<comment type="subcellular location">
    <subcellularLocation>
        <location evidence="1">Cellular thylakoid membrane</location>
        <topology evidence="1">Single-pass membrane protein</topology>
    </subcellularLocation>
</comment>
<comment type="similarity">
    <text evidence="1">Belongs to the PsbE/PsbF family.</text>
</comment>
<reference key="1">
    <citation type="journal article" date="2007" name="PLoS Genet.">
        <title>Patterns and implications of gene gain and loss in the evolution of Prochlorococcus.</title>
        <authorList>
            <person name="Kettler G.C."/>
            <person name="Martiny A.C."/>
            <person name="Huang K."/>
            <person name="Zucker J."/>
            <person name="Coleman M.L."/>
            <person name="Rodrigue S."/>
            <person name="Chen F."/>
            <person name="Lapidus A."/>
            <person name="Ferriera S."/>
            <person name="Johnson J."/>
            <person name="Steglich C."/>
            <person name="Church G.M."/>
            <person name="Richardson P."/>
            <person name="Chisholm S.W."/>
        </authorList>
    </citation>
    <scope>NUCLEOTIDE SEQUENCE [LARGE SCALE GENOMIC DNA]</scope>
    <source>
        <strain>NATL1A</strain>
    </source>
</reference>
<organism>
    <name type="scientific">Prochlorococcus marinus (strain NATL1A)</name>
    <dbReference type="NCBI Taxonomy" id="167555"/>
    <lineage>
        <taxon>Bacteria</taxon>
        <taxon>Bacillati</taxon>
        <taxon>Cyanobacteriota</taxon>
        <taxon>Cyanophyceae</taxon>
        <taxon>Synechococcales</taxon>
        <taxon>Prochlorococcaceae</taxon>
        <taxon>Prochlorococcus</taxon>
    </lineage>
</organism>
<protein>
    <recommendedName>
        <fullName evidence="1">Cytochrome b559 subunit alpha</fullName>
    </recommendedName>
    <alternativeName>
        <fullName evidence="1">PSII reaction center subunit V</fullName>
    </alternativeName>
</protein>
<feature type="chain" id="PRO_1000056928" description="Cytochrome b559 subunit alpha">
    <location>
        <begin position="1"/>
        <end position="82"/>
    </location>
</feature>
<feature type="transmembrane region" description="Helical" evidence="1">
    <location>
        <begin position="22"/>
        <end position="36"/>
    </location>
</feature>
<feature type="binding site" description="axial binding residue" evidence="1">
    <location>
        <position position="24"/>
    </location>
    <ligand>
        <name>heme</name>
        <dbReference type="ChEBI" id="CHEBI:30413"/>
        <note>ligand shared with beta subunit</note>
    </ligand>
    <ligandPart>
        <name>Fe</name>
        <dbReference type="ChEBI" id="CHEBI:18248"/>
    </ligandPart>
</feature>
<gene>
    <name evidence="1" type="primary">psbE</name>
    <name type="ordered locus">NATL1_03771</name>
</gene>
<dbReference type="EMBL" id="CP000553">
    <property type="protein sequence ID" value="ABM74941.1"/>
    <property type="molecule type" value="Genomic_DNA"/>
</dbReference>
<dbReference type="RefSeq" id="WP_011294296.1">
    <property type="nucleotide sequence ID" value="NC_008819.1"/>
</dbReference>
<dbReference type="SMR" id="A2C0D1"/>
<dbReference type="KEGG" id="pme:NATL1_03771"/>
<dbReference type="eggNOG" id="ENOG5032RR6">
    <property type="taxonomic scope" value="Bacteria"/>
</dbReference>
<dbReference type="HOGENOM" id="CLU_194095_0_0_3"/>
<dbReference type="Proteomes" id="UP000002592">
    <property type="component" value="Chromosome"/>
</dbReference>
<dbReference type="GO" id="GO:0009523">
    <property type="term" value="C:photosystem II"/>
    <property type="evidence" value="ECO:0007669"/>
    <property type="project" value="UniProtKB-KW"/>
</dbReference>
<dbReference type="GO" id="GO:0031676">
    <property type="term" value="C:plasma membrane-derived thylakoid membrane"/>
    <property type="evidence" value="ECO:0007669"/>
    <property type="project" value="UniProtKB-SubCell"/>
</dbReference>
<dbReference type="GO" id="GO:0009055">
    <property type="term" value="F:electron transfer activity"/>
    <property type="evidence" value="ECO:0007669"/>
    <property type="project" value="UniProtKB-UniRule"/>
</dbReference>
<dbReference type="GO" id="GO:0020037">
    <property type="term" value="F:heme binding"/>
    <property type="evidence" value="ECO:0007669"/>
    <property type="project" value="InterPro"/>
</dbReference>
<dbReference type="GO" id="GO:0005506">
    <property type="term" value="F:iron ion binding"/>
    <property type="evidence" value="ECO:0007669"/>
    <property type="project" value="UniProtKB-UniRule"/>
</dbReference>
<dbReference type="GO" id="GO:0009767">
    <property type="term" value="P:photosynthetic electron transport chain"/>
    <property type="evidence" value="ECO:0007669"/>
    <property type="project" value="InterPro"/>
</dbReference>
<dbReference type="Gene3D" id="1.20.5.860">
    <property type="entry name" value="Photosystem II cytochrome b559, alpha subunit"/>
    <property type="match status" value="1"/>
</dbReference>
<dbReference type="HAMAP" id="MF_00642">
    <property type="entry name" value="PSII_PsbE"/>
    <property type="match status" value="1"/>
</dbReference>
<dbReference type="InterPro" id="IPR006217">
    <property type="entry name" value="PSII_cyt_b559_asu"/>
</dbReference>
<dbReference type="InterPro" id="IPR037025">
    <property type="entry name" value="PSII_cyt_b559_asu_sf"/>
</dbReference>
<dbReference type="InterPro" id="IPR013081">
    <property type="entry name" value="PSII_cyt_b559_N"/>
</dbReference>
<dbReference type="InterPro" id="IPR013082">
    <property type="entry name" value="PSII_cytb559_asu_lum"/>
</dbReference>
<dbReference type="NCBIfam" id="TIGR01332">
    <property type="entry name" value="cyt_b559_alpha"/>
    <property type="match status" value="1"/>
</dbReference>
<dbReference type="PANTHER" id="PTHR33391">
    <property type="entry name" value="CYTOCHROME B559 SUBUNIT BETA-RELATED"/>
    <property type="match status" value="1"/>
</dbReference>
<dbReference type="PANTHER" id="PTHR33391:SF9">
    <property type="entry name" value="CYTOCHROME B559 SUBUNIT BETA-RELATED"/>
    <property type="match status" value="1"/>
</dbReference>
<dbReference type="Pfam" id="PF00283">
    <property type="entry name" value="Cytochrom_B559"/>
    <property type="match status" value="1"/>
</dbReference>
<dbReference type="Pfam" id="PF00284">
    <property type="entry name" value="Cytochrom_B559a"/>
    <property type="match status" value="1"/>
</dbReference>
<dbReference type="PIRSF" id="PIRSF000036">
    <property type="entry name" value="PsbE"/>
    <property type="match status" value="1"/>
</dbReference>
<dbReference type="SUPFAM" id="SSF161045">
    <property type="entry name" value="Cytochrome b559 subunits"/>
    <property type="match status" value="1"/>
</dbReference>
<keyword id="KW-0249">Electron transport</keyword>
<keyword id="KW-0349">Heme</keyword>
<keyword id="KW-0408">Iron</keyword>
<keyword id="KW-0472">Membrane</keyword>
<keyword id="KW-0479">Metal-binding</keyword>
<keyword id="KW-0602">Photosynthesis</keyword>
<keyword id="KW-0604">Photosystem II</keyword>
<keyword id="KW-0793">Thylakoid</keyword>
<keyword id="KW-0812">Transmembrane</keyword>
<keyword id="KW-1133">Transmembrane helix</keyword>
<keyword id="KW-0813">Transport</keyword>
<evidence type="ECO:0000255" key="1">
    <source>
        <dbReference type="HAMAP-Rule" id="MF_00642"/>
    </source>
</evidence>
<evidence type="ECO:0000305" key="2"/>
<sequence>MAAGSTGERPFFEIITSVRYWIIHAVALPAIFVAGFLFVSSGLAYDAFGTPRPDTYFQAGESKAPVVVQRFDSKAELDTRLK</sequence>
<name>PSBE_PROM1</name>
<proteinExistence type="inferred from homology"/>
<accession>A2C0D1</accession>